<feature type="chain" id="PRO_0000166482" description="Potassium-transporting ATPase potassium-binding subunit">
    <location>
        <begin position="1"/>
        <end position="115" status="greater than"/>
    </location>
</feature>
<feature type="transmembrane region" description="Helical" evidence="2">
    <location>
        <begin position="8"/>
        <end position="28"/>
    </location>
</feature>
<feature type="transmembrane region" description="Helical" evidence="2">
    <location>
        <begin position="60"/>
        <end position="80"/>
    </location>
</feature>
<feature type="non-terminal residue">
    <location>
        <position position="115"/>
    </location>
</feature>
<accession>P94456</accession>
<dbReference type="EMBL" id="Y08754">
    <property type="protein sequence ID" value="CAA70001.1"/>
    <property type="molecule type" value="Genomic_DNA"/>
</dbReference>
<dbReference type="SMR" id="P94456"/>
<dbReference type="GO" id="GO:0005886">
    <property type="term" value="C:plasma membrane"/>
    <property type="evidence" value="ECO:0007669"/>
    <property type="project" value="UniProtKB-SubCell"/>
</dbReference>
<dbReference type="GO" id="GO:0008556">
    <property type="term" value="F:P-type potassium transmembrane transporter activity"/>
    <property type="evidence" value="ECO:0007669"/>
    <property type="project" value="InterPro"/>
</dbReference>
<dbReference type="InterPro" id="IPR004623">
    <property type="entry name" value="KdpA"/>
</dbReference>
<dbReference type="PANTHER" id="PTHR30607">
    <property type="entry name" value="POTASSIUM-TRANSPORTING ATPASE A CHAIN"/>
    <property type="match status" value="1"/>
</dbReference>
<dbReference type="PANTHER" id="PTHR30607:SF2">
    <property type="entry name" value="POTASSIUM-TRANSPORTING ATPASE POTASSIUM-BINDING SUBUNIT"/>
    <property type="match status" value="1"/>
</dbReference>
<dbReference type="Pfam" id="PF03814">
    <property type="entry name" value="KdpA"/>
    <property type="match status" value="1"/>
</dbReference>
<keyword id="KW-1003">Cell membrane</keyword>
<keyword id="KW-0406">Ion transport</keyword>
<keyword id="KW-0472">Membrane</keyword>
<keyword id="KW-0630">Potassium</keyword>
<keyword id="KW-0633">Potassium transport</keyword>
<keyword id="KW-0812">Transmembrane</keyword>
<keyword id="KW-1133">Transmembrane helix</keyword>
<keyword id="KW-0813">Transport</keyword>
<name>KDPA_GEOSE</name>
<organism>
    <name type="scientific">Geobacillus stearothermophilus</name>
    <name type="common">Bacillus stearothermophilus</name>
    <dbReference type="NCBI Taxonomy" id="1422"/>
    <lineage>
        <taxon>Bacteria</taxon>
        <taxon>Bacillati</taxon>
        <taxon>Bacillota</taxon>
        <taxon>Bacilli</taxon>
        <taxon>Bacillales</taxon>
        <taxon>Anoxybacillaceae</taxon>
        <taxon>Geobacillus</taxon>
    </lineage>
</organism>
<gene>
    <name evidence="1" type="primary">kdpA</name>
</gene>
<comment type="function">
    <text evidence="1">Part of the high-affinity ATP-driven potassium transport (or Kdp) system, which catalyzes the hydrolysis of ATP coupled with the electrogenic transport of potassium into the cytoplasm. This subunit binds the extracellular potassium ions and delivers the ions to the membrane domain of KdpB through an intramembrane tunnel.</text>
</comment>
<comment type="subunit">
    <text evidence="1">The system is composed of three essential subunits: KdpA, KdpB and KdpC.</text>
</comment>
<comment type="subcellular location">
    <subcellularLocation>
        <location evidence="1">Cell membrane</location>
        <topology evidence="1">Multi-pass membrane protein</topology>
    </subcellularLocation>
</comment>
<comment type="similarity">
    <text evidence="1">Belongs to the KdpA family.</text>
</comment>
<sequence>MSFRNIHYFLLLIVIAVPLGKYLYVAFFEKGKIDRFFSPIEAVIYRLSGIRSLEEMTWKSYCTALLIVNAALLGISYGLLRIQHYLPLNGAKVENMEPTLTFNTVVSFMTNTNLQ</sequence>
<reference key="1">
    <citation type="journal article" date="1997" name="Appl. Environ. Microbiol.">
        <title>Two amino acid amidohydrolase genes encoding L-stereospecific carbamoylase and aminoacylase are organized in a common operon in Bacillus stearothermophilus.</title>
        <authorList>
            <person name="Batisse N."/>
            <person name="Weigel P."/>
            <person name="Lecocq M."/>
            <person name="Sakanyan V."/>
        </authorList>
    </citation>
    <scope>NUCLEOTIDE SEQUENCE [GENOMIC DNA]</scope>
    <source>
        <strain>NCIMB 8224 / CCM 2186 / NCA C-1235.1 / VKM B-718</strain>
    </source>
</reference>
<proteinExistence type="inferred from homology"/>
<protein>
    <recommendedName>
        <fullName evidence="1">Potassium-transporting ATPase potassium-binding subunit</fullName>
    </recommendedName>
    <alternativeName>
        <fullName evidence="1">ATP phosphohydrolase [potassium-transporting] A chain</fullName>
    </alternativeName>
    <alternativeName>
        <fullName evidence="1">Potassium-binding and translocating subunit A</fullName>
    </alternativeName>
    <alternativeName>
        <fullName evidence="1">Potassium-translocating ATPase A chain</fullName>
    </alternativeName>
</protein>
<evidence type="ECO:0000250" key="1">
    <source>
        <dbReference type="UniProtKB" id="P03959"/>
    </source>
</evidence>
<evidence type="ECO:0000255" key="2"/>